<proteinExistence type="inferred from homology"/>
<protein>
    <recommendedName>
        <fullName evidence="1">Virginiamycin B lyase</fullName>
        <ecNumber evidence="1">4.2.99.-</ecNumber>
    </recommendedName>
    <alternativeName>
        <fullName evidence="1">Streptogramin B lyase</fullName>
    </alternativeName>
</protein>
<dbReference type="EC" id="4.2.99.-" evidence="1"/>
<dbReference type="EMBL" id="AE017333">
    <property type="protein sequence ID" value="AAU39223.1"/>
    <property type="status" value="ALT_INIT"/>
    <property type="molecule type" value="Genomic_DNA"/>
</dbReference>
<dbReference type="EMBL" id="CP000002">
    <property type="protein sequence ID" value="AAU21870.1"/>
    <property type="molecule type" value="Genomic_DNA"/>
</dbReference>
<dbReference type="RefSeq" id="WP_011197502.1">
    <property type="nucleotide sequence ID" value="NC_006322.1"/>
</dbReference>
<dbReference type="SMR" id="Q62ZD8"/>
<dbReference type="STRING" id="279010.BL01635"/>
<dbReference type="KEGG" id="bld:BLi00263"/>
<dbReference type="KEGG" id="bli:BL01635"/>
<dbReference type="PATRIC" id="fig|279010.13.peg.243"/>
<dbReference type="eggNOG" id="COG4257">
    <property type="taxonomic scope" value="Bacteria"/>
</dbReference>
<dbReference type="HOGENOM" id="CLU_054751_1_0_9"/>
<dbReference type="Proteomes" id="UP000000606">
    <property type="component" value="Chromosome"/>
</dbReference>
<dbReference type="GO" id="GO:0030288">
    <property type="term" value="C:outer membrane-bounded periplasmic space"/>
    <property type="evidence" value="ECO:0007669"/>
    <property type="project" value="TreeGrafter"/>
</dbReference>
<dbReference type="GO" id="GO:0016835">
    <property type="term" value="F:carbon-oxygen lyase activity"/>
    <property type="evidence" value="ECO:0007669"/>
    <property type="project" value="UniProtKB-UniRule"/>
</dbReference>
<dbReference type="GO" id="GO:0000287">
    <property type="term" value="F:magnesium ion binding"/>
    <property type="evidence" value="ECO:0007669"/>
    <property type="project" value="InterPro"/>
</dbReference>
<dbReference type="GO" id="GO:0017001">
    <property type="term" value="P:antibiotic catabolic process"/>
    <property type="evidence" value="ECO:0007669"/>
    <property type="project" value="UniProtKB-UniRule"/>
</dbReference>
<dbReference type="GO" id="GO:0046677">
    <property type="term" value="P:response to antibiotic"/>
    <property type="evidence" value="ECO:0007669"/>
    <property type="project" value="UniProtKB-KW"/>
</dbReference>
<dbReference type="Gene3D" id="2.130.10.10">
    <property type="entry name" value="YVTN repeat-like/Quinoprotein amine dehydrogenase"/>
    <property type="match status" value="1"/>
</dbReference>
<dbReference type="HAMAP" id="MF_01282">
    <property type="entry name" value="VirginiamycinB_lyase"/>
    <property type="match status" value="1"/>
</dbReference>
<dbReference type="InterPro" id="IPR011217">
    <property type="entry name" value="Streptogrm_lyase"/>
</dbReference>
<dbReference type="InterPro" id="IPR051344">
    <property type="entry name" value="Vgb"/>
</dbReference>
<dbReference type="InterPro" id="IPR015943">
    <property type="entry name" value="WD40/YVTN_repeat-like_dom_sf"/>
</dbReference>
<dbReference type="PANTHER" id="PTHR40274">
    <property type="entry name" value="VIRGINIAMYCIN B LYASE"/>
    <property type="match status" value="1"/>
</dbReference>
<dbReference type="PANTHER" id="PTHR40274:SF3">
    <property type="entry name" value="VIRGINIAMYCIN B LYASE"/>
    <property type="match status" value="1"/>
</dbReference>
<dbReference type="Pfam" id="PF24684">
    <property type="entry name" value="Vgb_lyase"/>
    <property type="match status" value="1"/>
</dbReference>
<dbReference type="PIRSF" id="PIRSF026412">
    <property type="entry name" value="Streptogrm_lyase"/>
    <property type="match status" value="1"/>
</dbReference>
<dbReference type="SUPFAM" id="SSF101898">
    <property type="entry name" value="NHL repeat"/>
    <property type="match status" value="1"/>
</dbReference>
<sequence length="295" mass="31344">MQIRMTEYQVPDPESGPYGITVCANGRIWFTEQKGNRIGMLTESGDITEYTIPTESAGASIITSGIDGELWFTEYKAGKIGKITPQGKITEYALPPGAAPFGIAAGCDDAMWYTDMAGHQIGRLSSSGEITEYKLPKPGAFPSFITRGADGALWFTQNQSGSIGRITADGDISEYPLPQEQSGPVGITAGPDGALWFTEINANQIGRITVSGKISEYQLPTAHARPHAIAAGGDGALWFTEWGAGQIGRITVDGDITEYPIPTADSEPHGIAAGSAHSIWFAEECGRIGKISIQN</sequence>
<name>VGB_BACLD</name>
<comment type="function">
    <text evidence="1">Inactivates the type B streptogramin antibiotics by linearizing the lactone ring at the ester linkage, generating a free phenylglycine carboxylate and converting the threonyl moiety into 2-amino-butenoic acid.</text>
</comment>
<comment type="cofactor">
    <cofactor evidence="1">
        <name>Mg(2+)</name>
        <dbReference type="ChEBI" id="CHEBI:18420"/>
    </cofactor>
</comment>
<comment type="subunit">
    <text evidence="1">Monomer.</text>
</comment>
<comment type="similarity">
    <text evidence="1">Belongs to the Vgb family.</text>
</comment>
<comment type="sequence caution" evidence="2">
    <conflict type="erroneous initiation">
        <sequence resource="EMBL-CDS" id="AAU39223"/>
    </conflict>
</comment>
<organism>
    <name type="scientific">Bacillus licheniformis (strain ATCC 14580 / DSM 13 / JCM 2505 / CCUG 7422 / NBRC 12200 / NCIMB 9375 / NCTC 10341 / NRRL NRS-1264 / Gibson 46)</name>
    <dbReference type="NCBI Taxonomy" id="279010"/>
    <lineage>
        <taxon>Bacteria</taxon>
        <taxon>Bacillati</taxon>
        <taxon>Bacillota</taxon>
        <taxon>Bacilli</taxon>
        <taxon>Bacillales</taxon>
        <taxon>Bacillaceae</taxon>
        <taxon>Bacillus</taxon>
    </lineage>
</organism>
<gene>
    <name evidence="1" type="primary">vgb</name>
    <name type="ordered locus">BLi00263</name>
    <name type="ordered locus">BL01635</name>
</gene>
<feature type="chain" id="PRO_0000313767" description="Virginiamycin B lyase">
    <location>
        <begin position="1"/>
        <end position="295"/>
    </location>
</feature>
<feature type="active site" description="Proton acceptor" evidence="1">
    <location>
        <position position="269"/>
    </location>
</feature>
<feature type="binding site" evidence="1">
    <location>
        <position position="227"/>
    </location>
    <ligand>
        <name>substrate</name>
    </ligand>
</feature>
<feature type="binding site" evidence="1">
    <location>
        <position position="267"/>
    </location>
    <ligand>
        <name>Mg(2+)</name>
        <dbReference type="ChEBI" id="CHEBI:18420"/>
    </ligand>
</feature>
<feature type="binding site" evidence="1">
    <location>
        <position position="284"/>
    </location>
    <ligand>
        <name>Mg(2+)</name>
        <dbReference type="ChEBI" id="CHEBI:18420"/>
    </ligand>
</feature>
<keyword id="KW-0046">Antibiotic resistance</keyword>
<keyword id="KW-0456">Lyase</keyword>
<keyword id="KW-0460">Magnesium</keyword>
<keyword id="KW-0479">Metal-binding</keyword>
<keyword id="KW-1185">Reference proteome</keyword>
<accession>Q62ZD8</accession>
<accession>Q65NZ1</accession>
<evidence type="ECO:0000255" key="1">
    <source>
        <dbReference type="HAMAP-Rule" id="MF_01282"/>
    </source>
</evidence>
<evidence type="ECO:0000305" key="2"/>
<reference key="1">
    <citation type="journal article" date="2004" name="J. Mol. Microbiol. Biotechnol.">
        <title>The complete genome sequence of Bacillus licheniformis DSM13, an organism with great industrial potential.</title>
        <authorList>
            <person name="Veith B."/>
            <person name="Herzberg C."/>
            <person name="Steckel S."/>
            <person name="Feesche J."/>
            <person name="Maurer K.H."/>
            <person name="Ehrenreich P."/>
            <person name="Baeumer S."/>
            <person name="Henne A."/>
            <person name="Liesegang H."/>
            <person name="Merkl R."/>
            <person name="Ehrenreich A."/>
            <person name="Gottschalk G."/>
        </authorList>
    </citation>
    <scope>NUCLEOTIDE SEQUENCE [LARGE SCALE GENOMIC DNA]</scope>
    <source>
        <strain>ATCC 14580 / DSM 13 / JCM 2505 / CCUG 7422 / NBRC 12200 / NCIMB 9375 / NCTC 10341 / NRRL NRS-1264 / Gibson 46</strain>
    </source>
</reference>
<reference key="2">
    <citation type="journal article" date="2004" name="Genome Biol.">
        <title>Complete genome sequence of the industrial bacterium Bacillus licheniformis and comparisons with closely related Bacillus species.</title>
        <authorList>
            <person name="Rey M.W."/>
            <person name="Ramaiya P."/>
            <person name="Nelson B.A."/>
            <person name="Brody-Karpin S.D."/>
            <person name="Zaretsky E.J."/>
            <person name="Tang M."/>
            <person name="Lopez de Leon A."/>
            <person name="Xiang H."/>
            <person name="Gusti V."/>
            <person name="Clausen I.G."/>
            <person name="Olsen P.B."/>
            <person name="Rasmussen M.D."/>
            <person name="Andersen J.T."/>
            <person name="Joergensen P.L."/>
            <person name="Larsen T.S."/>
            <person name="Sorokin A."/>
            <person name="Bolotin A."/>
            <person name="Lapidus A."/>
            <person name="Galleron N."/>
            <person name="Ehrlich S.D."/>
            <person name="Berka R.M."/>
        </authorList>
    </citation>
    <scope>NUCLEOTIDE SEQUENCE [LARGE SCALE GENOMIC DNA]</scope>
    <source>
        <strain>ATCC 14580 / DSM 13 / JCM 2505 / CCUG 7422 / NBRC 12200 / NCIMB 9375 / NCTC 10341 / NRRL NRS-1264 / Gibson 46</strain>
    </source>
</reference>